<gene>
    <name evidence="11" type="primary">CLAG3.2</name>
</gene>
<evidence type="ECO:0000250" key="1">
    <source>
        <dbReference type="UniProtKB" id="A0A1W6IZJ5"/>
    </source>
</evidence>
<evidence type="ECO:0000255" key="2"/>
<evidence type="ECO:0000256" key="3">
    <source>
        <dbReference type="SAM" id="MobiDB-lite"/>
    </source>
</evidence>
<evidence type="ECO:0000269" key="4">
    <source>
    </source>
</evidence>
<evidence type="ECO:0000269" key="5">
    <source>
    </source>
</evidence>
<evidence type="ECO:0000269" key="6">
    <source>
    </source>
</evidence>
<evidence type="ECO:0000269" key="7">
    <source>
    </source>
</evidence>
<evidence type="ECO:0000269" key="8">
    <source>
    </source>
</evidence>
<evidence type="ECO:0000303" key="9">
    <source>
    </source>
</evidence>
<evidence type="ECO:0000303" key="10">
    <source>
    </source>
</evidence>
<evidence type="ECO:0000303" key="11">
    <source>
    </source>
</evidence>
<evidence type="ECO:0000303" key="12">
    <source>
    </source>
</evidence>
<evidence type="ECO:0000303" key="13">
    <source>
    </source>
</evidence>
<evidence type="ECO:0000305" key="14"/>
<evidence type="ECO:0000312" key="15">
    <source>
        <dbReference type="EMBL" id="ARM59355.1"/>
    </source>
</evidence>
<evidence type="ECO:0007744" key="16">
    <source>
        <dbReference type="PDB" id="7KIY"/>
    </source>
</evidence>
<evidence type="ECO:0007829" key="17">
    <source>
        <dbReference type="PDB" id="7KIY"/>
    </source>
</evidence>
<proteinExistence type="evidence at protein level"/>
<feature type="signal peptide" evidence="2">
    <location>
        <begin position="1"/>
        <end position="24"/>
    </location>
</feature>
<feature type="chain" id="PRO_5012890650" description="Cytoadherence-linked asexual protein 3.2" evidence="2">
    <location>
        <begin position="25"/>
        <end position="1421"/>
    </location>
</feature>
<feature type="transmembrane region" description="Helical" evidence="2">
    <location>
        <begin position="1203"/>
        <end position="1223"/>
    </location>
</feature>
<feature type="region of interest" description="Disordered" evidence="3">
    <location>
        <begin position="1371"/>
        <end position="1413"/>
    </location>
</feature>
<feature type="compositionally biased region" description="Acidic residues" evidence="3">
    <location>
        <begin position="1398"/>
        <end position="1412"/>
    </location>
</feature>
<feature type="disulfide bond" evidence="8 16">
    <location>
        <begin position="335"/>
        <end position="363"/>
    </location>
</feature>
<feature type="disulfide bond" evidence="8 16">
    <location>
        <begin position="409"/>
        <end position="415"/>
    </location>
</feature>
<feature type="disulfide bond" evidence="8 16">
    <location>
        <begin position="519"/>
        <end position="547"/>
    </location>
</feature>
<feature type="disulfide bond" evidence="8 16">
    <location>
        <begin position="523"/>
        <end position="544"/>
    </location>
</feature>
<feature type="disulfide bond" evidence="8 16">
    <location>
        <begin position="1352"/>
        <end position="1355"/>
    </location>
</feature>
<feature type="sequence variant" description="In mutant parasites with altered plasmodial surface anion channel (PSAC) activity generated by in vitro selection with leupeptin; probably mediates leupeptin resistance." evidence="4">
    <original>A</original>
    <variation>T</variation>
    <location>
        <position position="1215"/>
    </location>
</feature>
<feature type="helix" evidence="17">
    <location>
        <begin position="57"/>
        <end position="65"/>
    </location>
</feature>
<feature type="helix" evidence="17">
    <location>
        <begin position="68"/>
        <end position="86"/>
    </location>
</feature>
<feature type="strand" evidence="17">
    <location>
        <begin position="94"/>
        <end position="98"/>
    </location>
</feature>
<feature type="strand" evidence="17">
    <location>
        <begin position="100"/>
        <end position="103"/>
    </location>
</feature>
<feature type="helix" evidence="17">
    <location>
        <begin position="105"/>
        <end position="107"/>
    </location>
</feature>
<feature type="strand" evidence="17">
    <location>
        <begin position="108"/>
        <end position="112"/>
    </location>
</feature>
<feature type="strand" evidence="17">
    <location>
        <begin position="114"/>
        <end position="116"/>
    </location>
</feature>
<feature type="strand" evidence="17">
    <location>
        <begin position="120"/>
        <end position="123"/>
    </location>
</feature>
<feature type="helix" evidence="17">
    <location>
        <begin position="130"/>
        <end position="146"/>
    </location>
</feature>
<feature type="strand" evidence="17">
    <location>
        <begin position="150"/>
        <end position="152"/>
    </location>
</feature>
<feature type="helix" evidence="17">
    <location>
        <begin position="155"/>
        <end position="180"/>
    </location>
</feature>
<feature type="helix" evidence="17">
    <location>
        <begin position="185"/>
        <end position="197"/>
    </location>
</feature>
<feature type="strand" evidence="17">
    <location>
        <begin position="202"/>
        <end position="205"/>
    </location>
</feature>
<feature type="helix" evidence="17">
    <location>
        <begin position="211"/>
        <end position="225"/>
    </location>
</feature>
<feature type="strand" evidence="17">
    <location>
        <begin position="226"/>
        <end position="228"/>
    </location>
</feature>
<feature type="helix" evidence="17">
    <location>
        <begin position="234"/>
        <end position="237"/>
    </location>
</feature>
<feature type="strand" evidence="17">
    <location>
        <begin position="255"/>
        <end position="257"/>
    </location>
</feature>
<feature type="helix" evidence="17">
    <location>
        <begin position="261"/>
        <end position="273"/>
    </location>
</feature>
<feature type="helix" evidence="17">
    <location>
        <begin position="278"/>
        <end position="281"/>
    </location>
</feature>
<feature type="helix" evidence="17">
    <location>
        <begin position="286"/>
        <end position="300"/>
    </location>
</feature>
<feature type="helix" evidence="17">
    <location>
        <begin position="302"/>
        <end position="306"/>
    </location>
</feature>
<feature type="helix" evidence="17">
    <location>
        <begin position="316"/>
        <end position="319"/>
    </location>
</feature>
<feature type="helix" evidence="17">
    <location>
        <begin position="326"/>
        <end position="332"/>
    </location>
</feature>
<feature type="turn" evidence="17">
    <location>
        <begin position="333"/>
        <end position="336"/>
    </location>
</feature>
<feature type="helix" evidence="17">
    <location>
        <begin position="347"/>
        <end position="350"/>
    </location>
</feature>
<feature type="helix" evidence="17">
    <location>
        <begin position="351"/>
        <end position="353"/>
    </location>
</feature>
<feature type="helix" evidence="17">
    <location>
        <begin position="362"/>
        <end position="384"/>
    </location>
</feature>
<feature type="turn" evidence="17">
    <location>
        <begin position="387"/>
        <end position="389"/>
    </location>
</feature>
<feature type="helix" evidence="17">
    <location>
        <begin position="397"/>
        <end position="408"/>
    </location>
</feature>
<feature type="strand" evidence="17">
    <location>
        <begin position="409"/>
        <end position="413"/>
    </location>
</feature>
<feature type="helix" evidence="17">
    <location>
        <begin position="417"/>
        <end position="419"/>
    </location>
</feature>
<feature type="turn" evidence="17">
    <location>
        <begin position="421"/>
        <end position="424"/>
    </location>
</feature>
<feature type="strand" evidence="17">
    <location>
        <begin position="425"/>
        <end position="427"/>
    </location>
</feature>
<feature type="helix" evidence="17">
    <location>
        <begin position="448"/>
        <end position="458"/>
    </location>
</feature>
<feature type="helix" evidence="17">
    <location>
        <begin position="459"/>
        <end position="461"/>
    </location>
</feature>
<feature type="helix" evidence="17">
    <location>
        <begin position="465"/>
        <end position="479"/>
    </location>
</feature>
<feature type="helix" evidence="17">
    <location>
        <begin position="483"/>
        <end position="488"/>
    </location>
</feature>
<feature type="turn" evidence="17">
    <location>
        <begin position="489"/>
        <end position="491"/>
    </location>
</feature>
<feature type="helix" evidence="17">
    <location>
        <begin position="493"/>
        <end position="495"/>
    </location>
</feature>
<feature type="helix" evidence="17">
    <location>
        <begin position="497"/>
        <end position="502"/>
    </location>
</feature>
<feature type="helix" evidence="17">
    <location>
        <begin position="509"/>
        <end position="520"/>
    </location>
</feature>
<feature type="helix" evidence="17">
    <location>
        <begin position="521"/>
        <end position="523"/>
    </location>
</feature>
<feature type="strand" evidence="17">
    <location>
        <begin position="524"/>
        <end position="528"/>
    </location>
</feature>
<feature type="strand" evidence="17">
    <location>
        <begin position="537"/>
        <end position="539"/>
    </location>
</feature>
<feature type="helix" evidence="17">
    <location>
        <begin position="543"/>
        <end position="554"/>
    </location>
</feature>
<feature type="helix" evidence="17">
    <location>
        <begin position="564"/>
        <end position="573"/>
    </location>
</feature>
<feature type="helix" evidence="17">
    <location>
        <begin position="588"/>
        <end position="598"/>
    </location>
</feature>
<feature type="helix" evidence="17">
    <location>
        <begin position="603"/>
        <end position="613"/>
    </location>
</feature>
<feature type="helix" evidence="17">
    <location>
        <begin position="617"/>
        <end position="619"/>
    </location>
</feature>
<feature type="helix" evidence="17">
    <location>
        <begin position="624"/>
        <end position="631"/>
    </location>
</feature>
<feature type="turn" evidence="17">
    <location>
        <begin position="632"/>
        <end position="636"/>
    </location>
</feature>
<feature type="turn" evidence="17">
    <location>
        <begin position="639"/>
        <end position="641"/>
    </location>
</feature>
<feature type="strand" evidence="17">
    <location>
        <begin position="657"/>
        <end position="659"/>
    </location>
</feature>
<feature type="helix" evidence="17">
    <location>
        <begin position="668"/>
        <end position="674"/>
    </location>
</feature>
<feature type="helix" evidence="17">
    <location>
        <begin position="681"/>
        <end position="685"/>
    </location>
</feature>
<feature type="strand" evidence="17">
    <location>
        <begin position="689"/>
        <end position="692"/>
    </location>
</feature>
<feature type="helix" evidence="17">
    <location>
        <begin position="694"/>
        <end position="698"/>
    </location>
</feature>
<feature type="turn" evidence="17">
    <location>
        <begin position="699"/>
        <end position="701"/>
    </location>
</feature>
<feature type="strand" evidence="17">
    <location>
        <begin position="711"/>
        <end position="713"/>
    </location>
</feature>
<feature type="helix" evidence="17">
    <location>
        <begin position="721"/>
        <end position="731"/>
    </location>
</feature>
<feature type="turn" evidence="17">
    <location>
        <begin position="735"/>
        <end position="737"/>
    </location>
</feature>
<feature type="helix" evidence="17">
    <location>
        <begin position="739"/>
        <end position="741"/>
    </location>
</feature>
<feature type="helix" evidence="17">
    <location>
        <begin position="748"/>
        <end position="757"/>
    </location>
</feature>
<feature type="helix" evidence="17">
    <location>
        <begin position="766"/>
        <end position="785"/>
    </location>
</feature>
<feature type="helix" evidence="17">
    <location>
        <begin position="788"/>
        <end position="794"/>
    </location>
</feature>
<feature type="turn" evidence="17">
    <location>
        <begin position="795"/>
        <end position="798"/>
    </location>
</feature>
<feature type="helix" evidence="17">
    <location>
        <begin position="806"/>
        <end position="818"/>
    </location>
</feature>
<feature type="turn" evidence="17">
    <location>
        <begin position="820"/>
        <end position="822"/>
    </location>
</feature>
<feature type="strand" evidence="17">
    <location>
        <begin position="871"/>
        <end position="873"/>
    </location>
</feature>
<feature type="helix" evidence="17">
    <location>
        <begin position="878"/>
        <end position="892"/>
    </location>
</feature>
<feature type="helix" evidence="17">
    <location>
        <begin position="901"/>
        <end position="915"/>
    </location>
</feature>
<feature type="strand" evidence="17">
    <location>
        <begin position="920"/>
        <end position="922"/>
    </location>
</feature>
<feature type="helix" evidence="17">
    <location>
        <begin position="947"/>
        <end position="960"/>
    </location>
</feature>
<feature type="helix" evidence="17">
    <location>
        <begin position="962"/>
        <end position="976"/>
    </location>
</feature>
<feature type="strand" evidence="17">
    <location>
        <begin position="979"/>
        <end position="981"/>
    </location>
</feature>
<feature type="helix" evidence="17">
    <location>
        <begin position="982"/>
        <end position="986"/>
    </location>
</feature>
<feature type="strand" evidence="17">
    <location>
        <begin position="993"/>
        <end position="995"/>
    </location>
</feature>
<feature type="helix" evidence="17">
    <location>
        <begin position="999"/>
        <end position="1021"/>
    </location>
</feature>
<feature type="helix" evidence="17">
    <location>
        <begin position="1030"/>
        <end position="1032"/>
    </location>
</feature>
<feature type="strand" evidence="17">
    <location>
        <begin position="1035"/>
        <end position="1037"/>
    </location>
</feature>
<feature type="helix" evidence="17">
    <location>
        <begin position="1041"/>
        <end position="1055"/>
    </location>
</feature>
<feature type="helix" evidence="17">
    <location>
        <begin position="1061"/>
        <end position="1070"/>
    </location>
</feature>
<feature type="helix" evidence="17">
    <location>
        <begin position="1148"/>
        <end position="1163"/>
    </location>
</feature>
<feature type="helix" evidence="17">
    <location>
        <begin position="1203"/>
        <end position="1223"/>
    </location>
</feature>
<feature type="helix" evidence="17">
    <location>
        <begin position="1232"/>
        <end position="1234"/>
    </location>
</feature>
<feature type="helix" evidence="17">
    <location>
        <begin position="1241"/>
        <end position="1259"/>
    </location>
</feature>
<feature type="helix" evidence="17">
    <location>
        <begin position="1268"/>
        <end position="1293"/>
    </location>
</feature>
<feature type="turn" evidence="17">
    <location>
        <begin position="1294"/>
        <end position="1296"/>
    </location>
</feature>
<feature type="helix" evidence="17">
    <location>
        <begin position="1311"/>
        <end position="1321"/>
    </location>
</feature>
<feature type="helix" evidence="17">
    <location>
        <begin position="1322"/>
        <end position="1324"/>
    </location>
</feature>
<feature type="strand" evidence="17">
    <location>
        <begin position="1343"/>
        <end position="1345"/>
    </location>
</feature>
<feature type="helix" evidence="17">
    <location>
        <begin position="1346"/>
        <end position="1349"/>
    </location>
</feature>
<comment type="function">
    <text evidence="1">Participates in the formation of new permeability pathways in Plasmodium-infected erythrocytes enabling the uptake of nutrients from the blood plasma.</text>
</comment>
<comment type="subunit">
    <text evidence="8">Component of the RhopH complex (PubMed:33393463). RhopH complex is at least composed of CLAG3.1/CLAG3.2, RhopH2 and RhopH3 with a 1:1:1 subunit stoichiometry (PubMed:33393463). CLAG3.1/CLAG3.2 mediates subunit association through independent contacts with RhopH2 and RhopH3, which do not directly interact with one another (PubMed:33393463). Interacts with RhopH2 (PubMed:33393463). Interacts with RhopH3 (PubMed:33393463).</text>
</comment>
<comment type="subcellular location">
    <subcellularLocation>
        <location evidence="4 5 7 8">Host cell membrane</location>
        <topology evidence="2">Single-pass membrane protein</topology>
    </subcellularLocation>
    <subcellularLocation>
        <location evidence="4 5 7 8">Host cell membrane</location>
        <topology evidence="4 5">Peripheral membrane protein</topology>
        <orientation evidence="4">Cytoplasmic side</orientation>
    </subcellularLocation>
    <subcellularLocation>
        <location evidence="5 7">Parasitophorous vacuole membrane</location>
        <topology evidence="2">Single-pass membrane protein</topology>
    </subcellularLocation>
    <subcellularLocation>
        <location evidence="4 7">Host cytoplasm</location>
    </subcellularLocation>
    <subcellularLocation>
        <location evidence="4 5 7">Cytoplasmic vesicle</location>
        <location evidence="4 5 7">Secretory vesicle</location>
        <location evidence="4 5 7">Rhoptry</location>
    </subcellularLocation>
    <text evidence="5 8">Synthesized and trafficked in a soluble form (PubMed:33393463). Export to host cytosol is mediated by the Plasmodium translocon of exported proteins (PTEX) complex (PubMed:28221136). Membrane insertion depends on the activity of PTEX complex (PubMed:33393463).</text>
</comment>
<comment type="developmental stage">
    <text evidence="5 7 8">Expressed in merozoites (at protein level) (PubMed:32900800, PubMed:33393463). Expressed in ring-stage parasites (at protein level) (PubMed:28221136, PubMed:32900800, PubMed:33393463). Expressed in trophozoites (at protein level) (PubMed:28221136, PubMed:32900800, PubMed:33393463). Expressed in schizonts (at protein level) (PubMed:28221136, PubMed:32900800, PubMed:33393463).</text>
</comment>
<comment type="miscellaneous">
    <text evidence="6">Many Plasmodium falciparum strains have two highly similar paralogous genes, CLAG3.1 and CLAG3.2, that are mutually exclusively expressed (PubMed:28419281). Analysis of blood specimens from 20 Plasmodium falciparum-infected symptomatic patients indicates that parasites predominantly express CLAG3.2 in natural malaria infections (PubMed:28419281). CLAG3.1 is preferentially expressed in cultured parasites (PubMed:28419281). CLAG3.1/CLAG3.2 expression patterns can change under different environment conditions (PubMed:28419281).</text>
</comment>
<sequence>MVSFFKTPIIIFFFLLCLNEKVLCSINENENLGENKNENANVNTPENLNKLLNEYDNIEQLKSMIGNDELHKNLTILEKLILESLEKDKLKYPLLKQGTEQLIDISKFNKKNITDADDETYIIPTVQSSFHDIVKYEHLIKEQSIEIYNSDISDKIKKKIFIVRTLKTIKLMLIPLNSYKQNNDLKSALEELNNVFTNKEAQKESSPIGDHGTFFRKLLTHVRTIKENEDIENKGETLILGDNKIDVMNSNDFFFTTNSNVKFMENLDDITNEYGLGLINHLGPHLIALGHFVVLKLALKNYKNYFEAKNIKFFSWQKILEFSMSDRFKVLDMMCNHESVYYSEKKRRKTYLKVDRSSTSMECNILEYLLHYFNKYQLEIIKTTQDTDFDLHGMMEHKYIKDYFFSFMCNDPKECIIYHTNQFKKEANEENTFPEQEEPNRQISAFNLYLNYYYFMKRYSSYGTKKTLYVHLLNLTGLLNHDTRAYVTSLYLPGYYNAVEMSFTDDKEFSTLFESLIQCIEKCHSDQARQISKDSNLLNNITKCDLCKGAFLYANMKFDEVPSMLQKFYVYLTKGLKIQKVSSLIKTLDIYQDYSNFLSHDINWYTFLFLFRLTSFKEIANKNVAEAMYLNIKDEDTFNKTIVTNYWYPSPIKKYYTLYVRKHIPNNLVDELEKLMKSGTLEKMKKSLTFLVHVNSFLQLDFFHQLNEPPLGLPRSYPLSLVLEHKFKEWMDSSPAGFYFSNYQNPYIRKDLHDKVLSQKFEPPKMNQWNKVLKSLIECAYDMYFEQRHVKNLYKYHNIYNINNKLMLMRDSIDLYKNNFDDVLFFADIFNMRKYMTATPVYKKVKDRVYHTLHSITGNSVNFYKYGIIYGFKVNKEILKEVVDELYSIYNFNTDIFTDTSFLQTVYLLFRRIEETYRTQRRDDKISVNNVFFMNVANNYSKLNKEEREIEIHNSMASRYYAKTMFAAFQMLFSTMLSNNVDNLDKAYGLSENIQVATSTSAFLTFAYVYNGSIMDSVTNSLLPPYAKKPITQLKYGKTFVFSNYFMLASKMYDMLNYKNLSLLCEYQAVASANFYSAKKVGQFLGRKFLPITTYFLVMRISWTHAFTTGSHLITYFDPPNTNPSTLPNCASGKNKSPESFFFTHALAAEASKYLFFYFFTNLYLDAYKSFPGGFGPAIKEQTQHVQEQTYERKPSVHSFNRNFFMELANGFMYAFCFFAISQMYAYFENINFYITSNFRFLDRYYGVFNKYFINYAIIKLKEITSDLLIKYEREAYLNMKKYGYLGEVIAARLSPKDKIMNYLHETNDDVMSNLRRYDMENAFKNKMVTYVDDFAFFDDCGKNEQFLNERCDYCPVIEEVEETELFTTTGDKNTNETTEIKKQTSTYIDTEKMNEADSADSDDEKDFDTPDNELMIARFH</sequence>
<reference evidence="15" key="1">
    <citation type="journal article" date="2017" name="J. Infect. Dis.">
        <title>Expression of the Plasmodium falciparum Clonally Variant clag3 Genes in Human Infections.</title>
        <authorList>
            <person name="Mira-Martinez S."/>
            <person name="van Schuppen E."/>
            <person name="Amambua-Ngwa A."/>
            <person name="Bottieau E."/>
            <person name="Affara M."/>
            <person name="Van Esbroeck M."/>
            <person name="Vlieghe E."/>
            <person name="Guetens P."/>
            <person name="Rovira-Graells N."/>
            <person name="Gomez-Perez G.P."/>
            <person name="Alonso P.L."/>
            <person name="D'Alessandro U."/>
            <person name="Rosanas-Urgell A."/>
            <person name="Cortes A."/>
        </authorList>
    </citation>
    <scope>NUCLEOTIDE SEQUENCE [GENOMIC DNA]</scope>
    <source>
        <strain evidence="15">P12-ITM</strain>
    </source>
</reference>
<reference evidence="14" key="2">
    <citation type="journal article" date="2011" name="Cell">
        <title>Malaria parasite clag3 genes determine channel-mediated nutrient uptake by infected red blood cells.</title>
        <authorList>
            <person name="Nguitragool W."/>
            <person name="Bokhari A.A."/>
            <person name="Pillai A.D."/>
            <person name="Rayavara K."/>
            <person name="Sharma P."/>
            <person name="Turpin B."/>
            <person name="Aravind L."/>
            <person name="Desai S.A."/>
        </authorList>
    </citation>
    <scope>SUBCELLULAR LOCATION</scope>
    <scope>VARIANT THR-1215</scope>
    <source>
        <strain evidence="9">HB3</strain>
    </source>
</reference>
<reference evidence="14" key="3">
    <citation type="journal article" date="2017" name="Elife">
        <title>An essential dual-function complex mediates erythrocyte invasion and channel-mediated nutrient uptake in malaria parasites.</title>
        <authorList>
            <person name="Ito D."/>
            <person name="Schureck M.A."/>
            <person name="Desai S.A."/>
        </authorList>
    </citation>
    <scope>SUBCELLULAR LOCATION</scope>
    <scope>DEVELOPMENTAL STAGE</scope>
    <source>
        <strain evidence="10">KC5</strain>
    </source>
</reference>
<reference evidence="14" key="4">
    <citation type="journal article" date="2020" name="MBio">
        <title>Live-Cell FRET Reveals that Malaria Nutrient Channel Proteins CLAG3 and RhopH2 Remain Associated throughout Their Tortuous Trafficking.</title>
        <authorList>
            <person name="Ahmad M."/>
            <person name="Manzella-Lapeira J."/>
            <person name="Saggu G."/>
            <person name="Ito D."/>
            <person name="Brzostowski J.A."/>
            <person name="Desai S.A."/>
        </authorList>
    </citation>
    <scope>SUBCELLULAR LOCATION</scope>
    <scope>DEVELOPMENTAL STAGE</scope>
    <source>
        <strain evidence="12">KC5</strain>
    </source>
</reference>
<reference evidence="16" key="5">
    <citation type="journal article" date="2021" name="Elife">
        <title>Malaria parasites use a soluble RhopH complex for erythrocyte invasion and an integral form for nutrient uptake.</title>
        <authorList>
            <person name="Schureck M.A."/>
            <person name="Darling J.E."/>
            <person name="Merk A."/>
            <person name="Shao J."/>
            <person name="Daggupati G."/>
            <person name="Srinivasan P."/>
            <person name="Olinares P.D.B."/>
            <person name="Rout M.P."/>
            <person name="Chait B.T."/>
            <person name="Wollenberg K."/>
            <person name="Subramaniam S."/>
            <person name="Desai S.A."/>
        </authorList>
    </citation>
    <scope>STRUCTURE BY ELECTRON MICROSCOPY (2.92 ANGSTROMS) IN RHOPH COMPLEX</scope>
    <scope>MASS SPECTROMETRY</scope>
    <scope>IDENTIFICATION IN RHOPH COMPLEX</scope>
    <scope>INTERACTION WITH RHOPH2 AND RHOPH3</scope>
    <scope>SUBCELLULAR LOCATION</scope>
    <scope>DEVELOPMENTAL STAGE</scope>
    <scope>DISULFIDE BOND</scope>
    <source>
        <strain evidence="13">KC5</strain>
    </source>
</reference>
<dbReference type="EMBL" id="KY092488">
    <property type="protein sequence ID" value="ARM59355.1"/>
    <property type="molecule type" value="Genomic_DNA"/>
</dbReference>
<dbReference type="PDB" id="7KIY">
    <property type="method" value="EM"/>
    <property type="resolution" value="2.92 A"/>
    <property type="chains" value="A=1-1421"/>
</dbReference>
<dbReference type="PDBsum" id="7KIY"/>
<dbReference type="EMDB" id="EMD-22890"/>
<dbReference type="SMR" id="A0A1W6IZK1"/>
<dbReference type="VEuPathDB" id="PlasmoDB:PF3D7_0302200"/>
<dbReference type="VEuPathDB" id="PlasmoDB:Pf7G8-2_000071800"/>
<dbReference type="VEuPathDB" id="PlasmoDB:Pf7G8_030008000"/>
<dbReference type="VEuPathDB" id="PlasmoDB:PfCD01_030007600"/>
<dbReference type="VEuPathDB" id="PlasmoDB:PfDd2_030007200"/>
<dbReference type="VEuPathDB" id="PlasmoDB:PfGA01_030008600"/>
<dbReference type="VEuPathDB" id="PlasmoDB:PfGB4_030008100"/>
<dbReference type="VEuPathDB" id="PlasmoDB:PfGN01_030007900"/>
<dbReference type="VEuPathDB" id="PlasmoDB:PfHB3_030006100"/>
<dbReference type="VEuPathDB" id="PlasmoDB:PfIT_030007000"/>
<dbReference type="VEuPathDB" id="PlasmoDB:PfKE01_030006900"/>
<dbReference type="VEuPathDB" id="PlasmoDB:PfKH01_030007000"/>
<dbReference type="VEuPathDB" id="PlasmoDB:PfKH02_030007800"/>
<dbReference type="VEuPathDB" id="PlasmoDB:PfML01_030007500"/>
<dbReference type="VEuPathDB" id="PlasmoDB:PfNF135_030007400"/>
<dbReference type="VEuPathDB" id="PlasmoDB:PfNF166_030005500"/>
<dbReference type="VEuPathDB" id="PlasmoDB:PfNF54_030007400"/>
<dbReference type="VEuPathDB" id="PlasmoDB:PfSD01_030007400"/>
<dbReference type="VEuPathDB" id="PlasmoDB:PfSN01_030007700"/>
<dbReference type="VEuPathDB" id="PlasmoDB:PfTG01_030008900"/>
<dbReference type="GO" id="GO:0031410">
    <property type="term" value="C:cytoplasmic vesicle"/>
    <property type="evidence" value="ECO:0007669"/>
    <property type="project" value="UniProtKB-KW"/>
</dbReference>
<dbReference type="GO" id="GO:0020002">
    <property type="term" value="C:host cell plasma membrane"/>
    <property type="evidence" value="ECO:0007669"/>
    <property type="project" value="UniProtKB-SubCell"/>
</dbReference>
<dbReference type="GO" id="GO:0016020">
    <property type="term" value="C:membrane"/>
    <property type="evidence" value="ECO:0007669"/>
    <property type="project" value="UniProtKB-KW"/>
</dbReference>
<dbReference type="GO" id="GO:0020008">
    <property type="term" value="C:rhoptry"/>
    <property type="evidence" value="ECO:0007669"/>
    <property type="project" value="UniProtKB-SubCell"/>
</dbReference>
<dbReference type="GO" id="GO:0020005">
    <property type="term" value="C:symbiont-containing vacuole membrane"/>
    <property type="evidence" value="ECO:0007669"/>
    <property type="project" value="UniProtKB-SubCell"/>
</dbReference>
<dbReference type="GO" id="GO:0020035">
    <property type="term" value="P:adhesion of symbiont to microvasculature"/>
    <property type="evidence" value="ECO:0007669"/>
    <property type="project" value="InterPro"/>
</dbReference>
<dbReference type="InterPro" id="IPR005553">
    <property type="entry name" value="CLAG"/>
</dbReference>
<dbReference type="PANTHER" id="PTHR31802">
    <property type="entry name" value="32 KDA HEAT SHOCK PROTEIN-RELATED"/>
    <property type="match status" value="1"/>
</dbReference>
<dbReference type="PANTHER" id="PTHR31802:SF39">
    <property type="entry name" value="CHROMOSOME UNDETERMINED SCAFFOLD_55, WHOLE GENOME SHOTGUN SEQUENCE"/>
    <property type="match status" value="1"/>
</dbReference>
<dbReference type="Pfam" id="PF03805">
    <property type="entry name" value="CLAG"/>
    <property type="match status" value="1"/>
</dbReference>
<accession>A0A1W6IZK1</accession>
<protein>
    <recommendedName>
        <fullName evidence="14">Cytoadherence-linked asexual protein 3.2</fullName>
        <shortName evidence="10 11 12 13">CLAG3</shortName>
        <shortName evidence="11">RhopH1</shortName>
    </recommendedName>
</protein>
<name>RCH1B_PLAFA</name>
<organism evidence="15">
    <name type="scientific">Plasmodium falciparum</name>
    <dbReference type="NCBI Taxonomy" id="5833"/>
    <lineage>
        <taxon>Eukaryota</taxon>
        <taxon>Sar</taxon>
        <taxon>Alveolata</taxon>
        <taxon>Apicomplexa</taxon>
        <taxon>Aconoidasida</taxon>
        <taxon>Haemosporida</taxon>
        <taxon>Plasmodiidae</taxon>
        <taxon>Plasmodium</taxon>
        <taxon>Plasmodium (Laverania)</taxon>
    </lineage>
</organism>
<keyword id="KW-0002">3D-structure</keyword>
<keyword id="KW-0968">Cytoplasmic vesicle</keyword>
<keyword id="KW-1015">Disulfide bond</keyword>
<keyword id="KW-1032">Host cell membrane</keyword>
<keyword id="KW-1035">Host cytoplasm</keyword>
<keyword id="KW-1043">Host membrane</keyword>
<keyword id="KW-0472">Membrane</keyword>
<keyword id="KW-0732">Signal</keyword>
<keyword id="KW-0812">Transmembrane</keyword>
<keyword id="KW-1133">Transmembrane helix</keyword>
<keyword id="KW-0813">Transport</keyword>